<dbReference type="EMBL" id="AB015287">
    <property type="protein sequence ID" value="BAA81911.1"/>
    <property type="molecule type" value="mRNA"/>
</dbReference>
<dbReference type="EMBL" id="AB015972">
    <property type="protein sequence ID" value="BAB82438.1"/>
    <property type="molecule type" value="mRNA"/>
</dbReference>
<dbReference type="EMBL" id="AC098832">
    <property type="protein sequence ID" value="AAT69585.1"/>
    <property type="molecule type" value="Genomic_DNA"/>
</dbReference>
<dbReference type="EMBL" id="AP008211">
    <property type="protein sequence ID" value="BAF18304.1"/>
    <property type="molecule type" value="Genomic_DNA"/>
</dbReference>
<dbReference type="EMBL" id="AP014961">
    <property type="protein sequence ID" value="BAS95461.1"/>
    <property type="molecule type" value="Genomic_DNA"/>
</dbReference>
<dbReference type="EMBL" id="CM000142">
    <property type="protein sequence ID" value="EAZ35364.1"/>
    <property type="molecule type" value="Genomic_DNA"/>
</dbReference>
<dbReference type="RefSeq" id="XP_015639466.1">
    <property type="nucleotide sequence ID" value="XM_015783980.1"/>
</dbReference>
<dbReference type="SMR" id="Q7GD79"/>
<dbReference type="BioGRID" id="808720">
    <property type="interactions" value="1"/>
</dbReference>
<dbReference type="FunCoup" id="Q7GD79">
    <property type="interactions" value="2714"/>
</dbReference>
<dbReference type="IntAct" id="Q7GD79">
    <property type="interactions" value="1"/>
</dbReference>
<dbReference type="STRING" id="39947.Q7GD79"/>
<dbReference type="PaxDb" id="39947-Q7GD79"/>
<dbReference type="EnsemblPlants" id="Os05t0574500-01">
    <property type="protein sequence ID" value="Os05t0574500-01"/>
    <property type="gene ID" value="Os05g0574500"/>
</dbReference>
<dbReference type="Gramene" id="Os05t0574500-01">
    <property type="protein sequence ID" value="Os05t0574500-01"/>
    <property type="gene ID" value="Os05g0574500"/>
</dbReference>
<dbReference type="KEGG" id="dosa:Os05g0574500"/>
<dbReference type="eggNOG" id="KOG0096">
    <property type="taxonomic scope" value="Eukaryota"/>
</dbReference>
<dbReference type="HOGENOM" id="CLU_041217_13_0_1"/>
<dbReference type="InParanoid" id="Q7GD79"/>
<dbReference type="OMA" id="FFWLARK"/>
<dbReference type="OrthoDB" id="2012850at2759"/>
<dbReference type="Proteomes" id="UP000000763">
    <property type="component" value="Chromosome 5"/>
</dbReference>
<dbReference type="Proteomes" id="UP000007752">
    <property type="component" value="Chromosome 5"/>
</dbReference>
<dbReference type="Proteomes" id="UP000059680">
    <property type="component" value="Chromosome 5"/>
</dbReference>
<dbReference type="ExpressionAtlas" id="Q7GD79">
    <property type="expression patterns" value="baseline and differential"/>
</dbReference>
<dbReference type="GO" id="GO:0005737">
    <property type="term" value="C:cytoplasm"/>
    <property type="evidence" value="ECO:0000318"/>
    <property type="project" value="GO_Central"/>
</dbReference>
<dbReference type="GO" id="GO:0005634">
    <property type="term" value="C:nucleus"/>
    <property type="evidence" value="ECO:0000318"/>
    <property type="project" value="GO_Central"/>
</dbReference>
<dbReference type="GO" id="GO:0005525">
    <property type="term" value="F:GTP binding"/>
    <property type="evidence" value="ECO:0007669"/>
    <property type="project" value="UniProtKB-KW"/>
</dbReference>
<dbReference type="GO" id="GO:0003924">
    <property type="term" value="F:GTPase activity"/>
    <property type="evidence" value="ECO:0000318"/>
    <property type="project" value="GO_Central"/>
</dbReference>
<dbReference type="GO" id="GO:0006606">
    <property type="term" value="P:protein import into nucleus"/>
    <property type="evidence" value="ECO:0000318"/>
    <property type="project" value="GO_Central"/>
</dbReference>
<dbReference type="GO" id="GO:0000054">
    <property type="term" value="P:ribosomal subunit export from nucleus"/>
    <property type="evidence" value="ECO:0000318"/>
    <property type="project" value="GO_Central"/>
</dbReference>
<dbReference type="CDD" id="cd00877">
    <property type="entry name" value="Ran"/>
    <property type="match status" value="1"/>
</dbReference>
<dbReference type="FunFam" id="3.40.50.300:FF:000369">
    <property type="entry name" value="GTP-binding nuclear protein"/>
    <property type="match status" value="1"/>
</dbReference>
<dbReference type="Gene3D" id="3.40.50.300">
    <property type="entry name" value="P-loop containing nucleotide triphosphate hydrolases"/>
    <property type="match status" value="1"/>
</dbReference>
<dbReference type="InterPro" id="IPR027417">
    <property type="entry name" value="P-loop_NTPase"/>
</dbReference>
<dbReference type="InterPro" id="IPR002041">
    <property type="entry name" value="Ran_GTPase"/>
</dbReference>
<dbReference type="InterPro" id="IPR005225">
    <property type="entry name" value="Small_GTP-bd"/>
</dbReference>
<dbReference type="InterPro" id="IPR001806">
    <property type="entry name" value="Small_GTPase"/>
</dbReference>
<dbReference type="NCBIfam" id="TIGR00231">
    <property type="entry name" value="small_GTP"/>
    <property type="match status" value="1"/>
</dbReference>
<dbReference type="PANTHER" id="PTHR24071:SF20">
    <property type="entry name" value="GTP-BINDING NUCLEAR PROTEIN RAN-2"/>
    <property type="match status" value="1"/>
</dbReference>
<dbReference type="PANTHER" id="PTHR24071">
    <property type="entry name" value="RAN GTPASE"/>
    <property type="match status" value="1"/>
</dbReference>
<dbReference type="Pfam" id="PF00071">
    <property type="entry name" value="Ras"/>
    <property type="match status" value="1"/>
</dbReference>
<dbReference type="PRINTS" id="PR00627">
    <property type="entry name" value="GTPRANTC4"/>
</dbReference>
<dbReference type="SMART" id="SM00175">
    <property type="entry name" value="RAB"/>
    <property type="match status" value="1"/>
</dbReference>
<dbReference type="SMART" id="SM00176">
    <property type="entry name" value="RAN"/>
    <property type="match status" value="1"/>
</dbReference>
<dbReference type="SMART" id="SM00173">
    <property type="entry name" value="RAS"/>
    <property type="match status" value="1"/>
</dbReference>
<dbReference type="SMART" id="SM00174">
    <property type="entry name" value="RHO"/>
    <property type="match status" value="1"/>
</dbReference>
<dbReference type="SUPFAM" id="SSF52540">
    <property type="entry name" value="P-loop containing nucleoside triphosphate hydrolases"/>
    <property type="match status" value="1"/>
</dbReference>
<dbReference type="PROSITE" id="PS51418">
    <property type="entry name" value="RAN"/>
    <property type="match status" value="1"/>
</dbReference>
<sequence length="221" mass="25039">MALPNQGTVDYPSFKLVIVGDGGTGKTTFVKRHLTGEFEKKYEPTIGVEVHPLDFTTNCGKIRFYCWDTAGQEKFGGLRDGYYIHGQCAIIMFDVTSRLTYKNVPTWHRDLCRVCENIPIVLCGNKVDVKNRQVKAKQVTFHRKKNLQYYEISAKSNYNFEKPFLYLARKLAGDPNLHFVEAVALKPPEVPIDLAMQQQHEAELAAAAAQPLPDDDDDLIE</sequence>
<name>RAN2_ORYSJ</name>
<keyword id="KW-0342">GTP-binding</keyword>
<keyword id="KW-0547">Nucleotide-binding</keyword>
<keyword id="KW-0539">Nucleus</keyword>
<keyword id="KW-0653">Protein transport</keyword>
<keyword id="KW-1185">Reference proteome</keyword>
<keyword id="KW-0813">Transport</keyword>
<proteinExistence type="evidence at transcript level"/>
<accession>Q7GD79</accession>
<accession>Q9XJ45</accession>
<protein>
    <recommendedName>
        <fullName>GTP-binding nuclear protein Ran-2</fullName>
        <shortName>OsRan2</shortName>
    </recommendedName>
    <alternativeName>
        <fullName>Ras-related nuclear protein 2</fullName>
    </alternativeName>
</protein>
<evidence type="ECO:0000250" key="1"/>
<evidence type="ECO:0000250" key="2">
    <source>
        <dbReference type="UniProtKB" id="P62825"/>
    </source>
</evidence>
<evidence type="ECO:0000255" key="3">
    <source>
        <dbReference type="PROSITE-ProRule" id="PRU00752"/>
    </source>
</evidence>
<evidence type="ECO:0000305" key="4"/>
<reference key="1">
    <citation type="submission" date="1998-06" db="EMBL/GenBank/DDBJ databases">
        <title>Functional characterization of rice Ran homologues.</title>
        <authorList>
            <person name="Jiang C."/>
            <person name="Matsuki R."/>
            <person name="Yamamoto N."/>
        </authorList>
    </citation>
    <scope>NUCLEOTIDE SEQUENCE [MRNA]</scope>
    <source>
        <strain>cv. Nipponbare</strain>
    </source>
</reference>
<reference key="2">
    <citation type="submission" date="1998-07" db="EMBL/GenBank/DDBJ databases">
        <title>Molecular Analysis of rice Ran-related genes.</title>
        <authorList>
            <person name="Kawagishi-Kobayashi M."/>
        </authorList>
    </citation>
    <scope>NUCLEOTIDE SEQUENCE [MRNA]</scope>
    <source>
        <strain>cv. Nipponbare</strain>
        <tissue>Seedling</tissue>
    </source>
</reference>
<reference key="3">
    <citation type="journal article" date="2005" name="Mol. Genet. Genomics">
        <title>A fine physical map of the rice chromosome 5.</title>
        <authorList>
            <person name="Cheng C.-H."/>
            <person name="Chung M.C."/>
            <person name="Liu S.-M."/>
            <person name="Chen S.-K."/>
            <person name="Kao F.Y."/>
            <person name="Lin S.-J."/>
            <person name="Hsiao S.-H."/>
            <person name="Tseng I.C."/>
            <person name="Hsing Y.-I.C."/>
            <person name="Wu H.-P."/>
            <person name="Chen C.-S."/>
            <person name="Shaw J.-F."/>
            <person name="Wu J."/>
            <person name="Matsumoto T."/>
            <person name="Sasaki T."/>
            <person name="Chen H.-C."/>
            <person name="Chow T.-Y."/>
        </authorList>
    </citation>
    <scope>NUCLEOTIDE SEQUENCE [LARGE SCALE GENOMIC DNA]</scope>
    <source>
        <strain>cv. Nipponbare</strain>
    </source>
</reference>
<reference key="4">
    <citation type="journal article" date="2005" name="Nature">
        <title>The map-based sequence of the rice genome.</title>
        <authorList>
            <consortium name="International rice genome sequencing project (IRGSP)"/>
        </authorList>
    </citation>
    <scope>NUCLEOTIDE SEQUENCE [LARGE SCALE GENOMIC DNA]</scope>
    <source>
        <strain>cv. Nipponbare</strain>
    </source>
</reference>
<reference key="5">
    <citation type="journal article" date="2008" name="Nucleic Acids Res.">
        <title>The rice annotation project database (RAP-DB): 2008 update.</title>
        <authorList>
            <consortium name="The rice annotation project (RAP)"/>
        </authorList>
    </citation>
    <scope>GENOME REANNOTATION</scope>
    <source>
        <strain>cv. Nipponbare</strain>
    </source>
</reference>
<reference key="6">
    <citation type="journal article" date="2013" name="Rice">
        <title>Improvement of the Oryza sativa Nipponbare reference genome using next generation sequence and optical map data.</title>
        <authorList>
            <person name="Kawahara Y."/>
            <person name="de la Bastide M."/>
            <person name="Hamilton J.P."/>
            <person name="Kanamori H."/>
            <person name="McCombie W.R."/>
            <person name="Ouyang S."/>
            <person name="Schwartz D.C."/>
            <person name="Tanaka T."/>
            <person name="Wu J."/>
            <person name="Zhou S."/>
            <person name="Childs K.L."/>
            <person name="Davidson R.M."/>
            <person name="Lin H."/>
            <person name="Quesada-Ocampo L."/>
            <person name="Vaillancourt B."/>
            <person name="Sakai H."/>
            <person name="Lee S.S."/>
            <person name="Kim J."/>
            <person name="Numa H."/>
            <person name="Itoh T."/>
            <person name="Buell C.R."/>
            <person name="Matsumoto T."/>
        </authorList>
    </citation>
    <scope>GENOME REANNOTATION</scope>
    <source>
        <strain>cv. Nipponbare</strain>
    </source>
</reference>
<reference key="7">
    <citation type="journal article" date="2005" name="PLoS Biol.">
        <title>The genomes of Oryza sativa: a history of duplications.</title>
        <authorList>
            <person name="Yu J."/>
            <person name="Wang J."/>
            <person name="Lin W."/>
            <person name="Li S."/>
            <person name="Li H."/>
            <person name="Zhou J."/>
            <person name="Ni P."/>
            <person name="Dong W."/>
            <person name="Hu S."/>
            <person name="Zeng C."/>
            <person name="Zhang J."/>
            <person name="Zhang Y."/>
            <person name="Li R."/>
            <person name="Xu Z."/>
            <person name="Li S."/>
            <person name="Li X."/>
            <person name="Zheng H."/>
            <person name="Cong L."/>
            <person name="Lin L."/>
            <person name="Yin J."/>
            <person name="Geng J."/>
            <person name="Li G."/>
            <person name="Shi J."/>
            <person name="Liu J."/>
            <person name="Lv H."/>
            <person name="Li J."/>
            <person name="Wang J."/>
            <person name="Deng Y."/>
            <person name="Ran L."/>
            <person name="Shi X."/>
            <person name="Wang X."/>
            <person name="Wu Q."/>
            <person name="Li C."/>
            <person name="Ren X."/>
            <person name="Wang J."/>
            <person name="Wang X."/>
            <person name="Li D."/>
            <person name="Liu D."/>
            <person name="Zhang X."/>
            <person name="Ji Z."/>
            <person name="Zhao W."/>
            <person name="Sun Y."/>
            <person name="Zhang Z."/>
            <person name="Bao J."/>
            <person name="Han Y."/>
            <person name="Dong L."/>
            <person name="Ji J."/>
            <person name="Chen P."/>
            <person name="Wu S."/>
            <person name="Liu J."/>
            <person name="Xiao Y."/>
            <person name="Bu D."/>
            <person name="Tan J."/>
            <person name="Yang L."/>
            <person name="Ye C."/>
            <person name="Zhang J."/>
            <person name="Xu J."/>
            <person name="Zhou Y."/>
            <person name="Yu Y."/>
            <person name="Zhang B."/>
            <person name="Zhuang S."/>
            <person name="Wei H."/>
            <person name="Liu B."/>
            <person name="Lei M."/>
            <person name="Yu H."/>
            <person name="Li Y."/>
            <person name="Xu H."/>
            <person name="Wei S."/>
            <person name="He X."/>
            <person name="Fang L."/>
            <person name="Zhang Z."/>
            <person name="Zhang Y."/>
            <person name="Huang X."/>
            <person name="Su Z."/>
            <person name="Tong W."/>
            <person name="Li J."/>
            <person name="Tong Z."/>
            <person name="Li S."/>
            <person name="Ye J."/>
            <person name="Wang L."/>
            <person name="Fang L."/>
            <person name="Lei T."/>
            <person name="Chen C.-S."/>
            <person name="Chen H.-C."/>
            <person name="Xu Z."/>
            <person name="Li H."/>
            <person name="Huang H."/>
            <person name="Zhang F."/>
            <person name="Xu H."/>
            <person name="Li N."/>
            <person name="Zhao C."/>
            <person name="Li S."/>
            <person name="Dong L."/>
            <person name="Huang Y."/>
            <person name="Li L."/>
            <person name="Xi Y."/>
            <person name="Qi Q."/>
            <person name="Li W."/>
            <person name="Zhang B."/>
            <person name="Hu W."/>
            <person name="Zhang Y."/>
            <person name="Tian X."/>
            <person name="Jiao Y."/>
            <person name="Liang X."/>
            <person name="Jin J."/>
            <person name="Gao L."/>
            <person name="Zheng W."/>
            <person name="Hao B."/>
            <person name="Liu S.-M."/>
            <person name="Wang W."/>
            <person name="Yuan L."/>
            <person name="Cao M."/>
            <person name="McDermott J."/>
            <person name="Samudrala R."/>
            <person name="Wang J."/>
            <person name="Wong G.K.-S."/>
            <person name="Yang H."/>
        </authorList>
    </citation>
    <scope>NUCLEOTIDE SEQUENCE [LARGE SCALE GENOMIC DNA]</scope>
    <source>
        <strain>cv. Nipponbare</strain>
    </source>
</reference>
<gene>
    <name type="primary">RAN2</name>
    <name type="ordered locus">Os05g0574500</name>
    <name type="ordered locus">LOC_Os05g49890</name>
    <name type="ORF">OJ1268_B08.8</name>
    <name type="ORF">OsJ_018847</name>
</gene>
<organism>
    <name type="scientific">Oryza sativa subsp. japonica</name>
    <name type="common">Rice</name>
    <dbReference type="NCBI Taxonomy" id="39947"/>
    <lineage>
        <taxon>Eukaryota</taxon>
        <taxon>Viridiplantae</taxon>
        <taxon>Streptophyta</taxon>
        <taxon>Embryophyta</taxon>
        <taxon>Tracheophyta</taxon>
        <taxon>Spermatophyta</taxon>
        <taxon>Magnoliopsida</taxon>
        <taxon>Liliopsida</taxon>
        <taxon>Poales</taxon>
        <taxon>Poaceae</taxon>
        <taxon>BOP clade</taxon>
        <taxon>Oryzoideae</taxon>
        <taxon>Oryzeae</taxon>
        <taxon>Oryzinae</taxon>
        <taxon>Oryza</taxon>
        <taxon>Oryza sativa</taxon>
    </lineage>
</organism>
<comment type="function">
    <text evidence="1">GTP-binding protein involved in nucleocytoplasmic transport. Required for the import of protein into the nucleus and also for RNA export. Involved in chromatin condensation and control of cell cycle (By similarity).</text>
</comment>
<comment type="subunit">
    <text evidence="2">Found in a nuclear export complex with RanGTP, exportin and pre-miRNA (By similarity).</text>
</comment>
<comment type="subcellular location">
    <subcellularLocation>
        <location evidence="1">Nucleus</location>
    </subcellularLocation>
</comment>
<comment type="similarity">
    <text evidence="3 4">Belongs to the small GTPase superfamily. Ran family.</text>
</comment>
<feature type="chain" id="PRO_0000347210" description="GTP-binding nuclear protein Ran-2">
    <location>
        <begin position="1"/>
        <end position="221"/>
    </location>
</feature>
<feature type="domain" description="Small GTPase Ran-type" evidence="3">
    <location>
        <begin position="10"/>
        <end position="174"/>
    </location>
</feature>
<feature type="region of interest" description="Switch-I" evidence="3">
    <location>
        <begin position="40"/>
        <end position="48"/>
    </location>
</feature>
<feature type="region of interest" description="Switch-II" evidence="3">
    <location>
        <begin position="71"/>
        <end position="87"/>
    </location>
</feature>
<feature type="binding site" evidence="2">
    <location>
        <begin position="21"/>
        <end position="28"/>
    </location>
    <ligand>
        <name>GTP</name>
        <dbReference type="ChEBI" id="CHEBI:37565"/>
    </ligand>
</feature>
<feature type="binding site" evidence="2">
    <location>
        <position position="71"/>
    </location>
    <ligand>
        <name>GTP</name>
        <dbReference type="ChEBI" id="CHEBI:37565"/>
    </ligand>
</feature>
<feature type="binding site" evidence="2">
    <location>
        <begin position="125"/>
        <end position="128"/>
    </location>
    <ligand>
        <name>GTP</name>
        <dbReference type="ChEBI" id="CHEBI:37565"/>
    </ligand>
</feature>
<feature type="binding site" evidence="2">
    <location>
        <begin position="153"/>
        <end position="155"/>
    </location>
    <ligand>
        <name>GTP</name>
        <dbReference type="ChEBI" id="CHEBI:37565"/>
    </ligand>
</feature>